<sequence length="121" mass="14103">MRVKGPSSKKHKKKILKLAKGYYGAKHRSFRRAKEQVLRSLQYEYRDRRLRKREFRRLWIQRINAAARLNGLSYSQFMHGLKLAGIDLNRKMLADIAVADPETFTKLAEKAKEAISQKSAA</sequence>
<accession>C0QT56</accession>
<comment type="function">
    <text evidence="1">Binds directly to 23S ribosomal RNA and is necessary for the in vitro assembly process of the 50S ribosomal subunit. It is not involved in the protein synthesizing functions of that subunit.</text>
</comment>
<comment type="similarity">
    <text evidence="1">Belongs to the bacterial ribosomal protein bL20 family.</text>
</comment>
<organism>
    <name type="scientific">Persephonella marina (strain DSM 14350 / EX-H1)</name>
    <dbReference type="NCBI Taxonomy" id="123214"/>
    <lineage>
        <taxon>Bacteria</taxon>
        <taxon>Pseudomonadati</taxon>
        <taxon>Aquificota</taxon>
        <taxon>Aquificia</taxon>
        <taxon>Aquificales</taxon>
        <taxon>Hydrogenothermaceae</taxon>
        <taxon>Persephonella</taxon>
    </lineage>
</organism>
<proteinExistence type="inferred from homology"/>
<evidence type="ECO:0000255" key="1">
    <source>
        <dbReference type="HAMAP-Rule" id="MF_00382"/>
    </source>
</evidence>
<evidence type="ECO:0000305" key="2"/>
<gene>
    <name evidence="1" type="primary">rplT</name>
    <name type="ordered locus">PERMA_0073</name>
</gene>
<reference key="1">
    <citation type="journal article" date="2009" name="J. Bacteriol.">
        <title>Complete and draft genome sequences of six members of the Aquificales.</title>
        <authorList>
            <person name="Reysenbach A.-L."/>
            <person name="Hamamura N."/>
            <person name="Podar M."/>
            <person name="Griffiths E."/>
            <person name="Ferreira S."/>
            <person name="Hochstein R."/>
            <person name="Heidelberg J."/>
            <person name="Johnson J."/>
            <person name="Mead D."/>
            <person name="Pohorille A."/>
            <person name="Sarmiento M."/>
            <person name="Schweighofer K."/>
            <person name="Seshadri R."/>
            <person name="Voytek M.A."/>
        </authorList>
    </citation>
    <scope>NUCLEOTIDE SEQUENCE [LARGE SCALE GENOMIC DNA]</scope>
    <source>
        <strain>DSM 14350 / EX-H1</strain>
    </source>
</reference>
<name>RL20_PERMH</name>
<feature type="chain" id="PRO_1000205721" description="Large ribosomal subunit protein bL20">
    <location>
        <begin position="1"/>
        <end position="121"/>
    </location>
</feature>
<dbReference type="EMBL" id="CP001230">
    <property type="protein sequence ID" value="ACO03680.1"/>
    <property type="molecule type" value="Genomic_DNA"/>
</dbReference>
<dbReference type="RefSeq" id="WP_012675919.1">
    <property type="nucleotide sequence ID" value="NC_012440.1"/>
</dbReference>
<dbReference type="SMR" id="C0QT56"/>
<dbReference type="STRING" id="123214.PERMA_0073"/>
<dbReference type="PaxDb" id="123214-PERMA_0073"/>
<dbReference type="KEGG" id="pmx:PERMA_0073"/>
<dbReference type="eggNOG" id="COG0292">
    <property type="taxonomic scope" value="Bacteria"/>
</dbReference>
<dbReference type="HOGENOM" id="CLU_123265_0_1_0"/>
<dbReference type="OrthoDB" id="9808966at2"/>
<dbReference type="Proteomes" id="UP000001366">
    <property type="component" value="Chromosome"/>
</dbReference>
<dbReference type="GO" id="GO:1990904">
    <property type="term" value="C:ribonucleoprotein complex"/>
    <property type="evidence" value="ECO:0007669"/>
    <property type="project" value="UniProtKB-KW"/>
</dbReference>
<dbReference type="GO" id="GO:0005840">
    <property type="term" value="C:ribosome"/>
    <property type="evidence" value="ECO:0007669"/>
    <property type="project" value="UniProtKB-KW"/>
</dbReference>
<dbReference type="GO" id="GO:0019843">
    <property type="term" value="F:rRNA binding"/>
    <property type="evidence" value="ECO:0007669"/>
    <property type="project" value="UniProtKB-UniRule"/>
</dbReference>
<dbReference type="GO" id="GO:0003735">
    <property type="term" value="F:structural constituent of ribosome"/>
    <property type="evidence" value="ECO:0007669"/>
    <property type="project" value="InterPro"/>
</dbReference>
<dbReference type="GO" id="GO:0000027">
    <property type="term" value="P:ribosomal large subunit assembly"/>
    <property type="evidence" value="ECO:0007669"/>
    <property type="project" value="UniProtKB-UniRule"/>
</dbReference>
<dbReference type="GO" id="GO:0006412">
    <property type="term" value="P:translation"/>
    <property type="evidence" value="ECO:0007669"/>
    <property type="project" value="InterPro"/>
</dbReference>
<dbReference type="CDD" id="cd07026">
    <property type="entry name" value="Ribosomal_L20"/>
    <property type="match status" value="1"/>
</dbReference>
<dbReference type="FunFam" id="1.10.1900.20:FF:000001">
    <property type="entry name" value="50S ribosomal protein L20"/>
    <property type="match status" value="1"/>
</dbReference>
<dbReference type="Gene3D" id="6.10.160.10">
    <property type="match status" value="1"/>
</dbReference>
<dbReference type="Gene3D" id="1.10.1900.20">
    <property type="entry name" value="Ribosomal protein L20"/>
    <property type="match status" value="1"/>
</dbReference>
<dbReference type="HAMAP" id="MF_00382">
    <property type="entry name" value="Ribosomal_bL20"/>
    <property type="match status" value="1"/>
</dbReference>
<dbReference type="InterPro" id="IPR005813">
    <property type="entry name" value="Ribosomal_bL20"/>
</dbReference>
<dbReference type="InterPro" id="IPR049946">
    <property type="entry name" value="RIBOSOMAL_L20_CS"/>
</dbReference>
<dbReference type="InterPro" id="IPR035566">
    <property type="entry name" value="Ribosomal_protein_bL20_C"/>
</dbReference>
<dbReference type="NCBIfam" id="TIGR01032">
    <property type="entry name" value="rplT_bact"/>
    <property type="match status" value="1"/>
</dbReference>
<dbReference type="PANTHER" id="PTHR10986">
    <property type="entry name" value="39S RIBOSOMAL PROTEIN L20"/>
    <property type="match status" value="1"/>
</dbReference>
<dbReference type="Pfam" id="PF00453">
    <property type="entry name" value="Ribosomal_L20"/>
    <property type="match status" value="1"/>
</dbReference>
<dbReference type="PRINTS" id="PR00062">
    <property type="entry name" value="RIBOSOMALL20"/>
</dbReference>
<dbReference type="SUPFAM" id="SSF74731">
    <property type="entry name" value="Ribosomal protein L20"/>
    <property type="match status" value="1"/>
</dbReference>
<dbReference type="PROSITE" id="PS00937">
    <property type="entry name" value="RIBOSOMAL_L20"/>
    <property type="match status" value="1"/>
</dbReference>
<protein>
    <recommendedName>
        <fullName evidence="1">Large ribosomal subunit protein bL20</fullName>
    </recommendedName>
    <alternativeName>
        <fullName evidence="2">50S ribosomal protein L20</fullName>
    </alternativeName>
</protein>
<keyword id="KW-1185">Reference proteome</keyword>
<keyword id="KW-0687">Ribonucleoprotein</keyword>
<keyword id="KW-0689">Ribosomal protein</keyword>
<keyword id="KW-0694">RNA-binding</keyword>
<keyword id="KW-0699">rRNA-binding</keyword>